<reference key="1">
    <citation type="submission" date="2007-03" db="EMBL/GenBank/DDBJ databases">
        <title>Sequencing analysis of Nasturtium officinale chloroplast DNA.</title>
        <authorList>
            <person name="Hosouchi T."/>
            <person name="Tsuruoka H."/>
            <person name="Kotani H."/>
        </authorList>
    </citation>
    <scope>NUCLEOTIDE SEQUENCE [LARGE SCALE GENOMIC DNA]</scope>
</reference>
<evidence type="ECO:0000255" key="1">
    <source>
        <dbReference type="HAMAP-Rule" id="MF_01303"/>
    </source>
</evidence>
<dbReference type="EC" id="1.97.1.12" evidence="1"/>
<dbReference type="EMBL" id="AP009376">
    <property type="protein sequence ID" value="BAF50691.1"/>
    <property type="molecule type" value="Genomic_DNA"/>
</dbReference>
<dbReference type="RefSeq" id="YP_001123866.1">
    <property type="nucleotide sequence ID" value="NC_009275.1"/>
</dbReference>
<dbReference type="SMR" id="A4QLY6"/>
<dbReference type="GeneID" id="4962208"/>
<dbReference type="GO" id="GO:0009535">
    <property type="term" value="C:chloroplast thylakoid membrane"/>
    <property type="evidence" value="ECO:0007669"/>
    <property type="project" value="UniProtKB-SubCell"/>
</dbReference>
<dbReference type="GO" id="GO:0009522">
    <property type="term" value="C:photosystem I"/>
    <property type="evidence" value="ECO:0007669"/>
    <property type="project" value="UniProtKB-KW"/>
</dbReference>
<dbReference type="GO" id="GO:0051539">
    <property type="term" value="F:4 iron, 4 sulfur cluster binding"/>
    <property type="evidence" value="ECO:0007669"/>
    <property type="project" value="UniProtKB-KW"/>
</dbReference>
<dbReference type="GO" id="GO:0009055">
    <property type="term" value="F:electron transfer activity"/>
    <property type="evidence" value="ECO:0007669"/>
    <property type="project" value="UniProtKB-UniRule"/>
</dbReference>
<dbReference type="GO" id="GO:0046872">
    <property type="term" value="F:metal ion binding"/>
    <property type="evidence" value="ECO:0007669"/>
    <property type="project" value="UniProtKB-KW"/>
</dbReference>
<dbReference type="GO" id="GO:0016491">
    <property type="term" value="F:oxidoreductase activity"/>
    <property type="evidence" value="ECO:0007669"/>
    <property type="project" value="UniProtKB-KW"/>
</dbReference>
<dbReference type="GO" id="GO:0009773">
    <property type="term" value="P:photosynthetic electron transport in photosystem I"/>
    <property type="evidence" value="ECO:0007669"/>
    <property type="project" value="InterPro"/>
</dbReference>
<dbReference type="FunFam" id="3.30.70.20:FF:000001">
    <property type="entry name" value="Photosystem I iron-sulfur center"/>
    <property type="match status" value="1"/>
</dbReference>
<dbReference type="Gene3D" id="3.30.70.20">
    <property type="match status" value="1"/>
</dbReference>
<dbReference type="HAMAP" id="MF_01303">
    <property type="entry name" value="PSI_PsaC"/>
    <property type="match status" value="1"/>
</dbReference>
<dbReference type="InterPro" id="IPR017896">
    <property type="entry name" value="4Fe4S_Fe-S-bd"/>
</dbReference>
<dbReference type="InterPro" id="IPR017900">
    <property type="entry name" value="4Fe4S_Fe_S_CS"/>
</dbReference>
<dbReference type="InterPro" id="IPR050157">
    <property type="entry name" value="PSI_iron-sulfur_center"/>
</dbReference>
<dbReference type="InterPro" id="IPR017491">
    <property type="entry name" value="PSI_PsaC"/>
</dbReference>
<dbReference type="NCBIfam" id="TIGR03048">
    <property type="entry name" value="PS_I_psaC"/>
    <property type="match status" value="1"/>
</dbReference>
<dbReference type="PANTHER" id="PTHR24960:SF79">
    <property type="entry name" value="PHOTOSYSTEM I IRON-SULFUR CENTER"/>
    <property type="match status" value="1"/>
</dbReference>
<dbReference type="PANTHER" id="PTHR24960">
    <property type="entry name" value="PHOTOSYSTEM I IRON-SULFUR CENTER-RELATED"/>
    <property type="match status" value="1"/>
</dbReference>
<dbReference type="Pfam" id="PF14697">
    <property type="entry name" value="Fer4_21"/>
    <property type="match status" value="1"/>
</dbReference>
<dbReference type="SUPFAM" id="SSF54862">
    <property type="entry name" value="4Fe-4S ferredoxins"/>
    <property type="match status" value="1"/>
</dbReference>
<dbReference type="PROSITE" id="PS00198">
    <property type="entry name" value="4FE4S_FER_1"/>
    <property type="match status" value="2"/>
</dbReference>
<dbReference type="PROSITE" id="PS51379">
    <property type="entry name" value="4FE4S_FER_2"/>
    <property type="match status" value="2"/>
</dbReference>
<sequence>MSHSVKIYDTCIGCTQCVRACPTDVLEMIPWDGCKAKQIASAPRTEDCVGCKRCESACPTDFLSVRVYLWHETTRSMGLAY</sequence>
<accession>A4QLY6</accession>
<geneLocation type="chloroplast"/>
<keyword id="KW-0004">4Fe-4S</keyword>
<keyword id="KW-0150">Chloroplast</keyword>
<keyword id="KW-0249">Electron transport</keyword>
<keyword id="KW-0408">Iron</keyword>
<keyword id="KW-0411">Iron-sulfur</keyword>
<keyword id="KW-0472">Membrane</keyword>
<keyword id="KW-0479">Metal-binding</keyword>
<keyword id="KW-0560">Oxidoreductase</keyword>
<keyword id="KW-0602">Photosynthesis</keyword>
<keyword id="KW-0603">Photosystem I</keyword>
<keyword id="KW-0934">Plastid</keyword>
<keyword id="KW-0677">Repeat</keyword>
<keyword id="KW-0793">Thylakoid</keyword>
<keyword id="KW-0813">Transport</keyword>
<comment type="function">
    <text evidence="1">Apoprotein for the two 4Fe-4S centers FA and FB of photosystem I (PSI); essential for photochemical activity. FB is the terminal electron acceptor of PSI, donating electrons to ferredoxin. The C-terminus interacts with PsaA/B/D and helps assemble the protein into the PSI complex. Required for binding of PsaD and PsaE to PSI. PSI is a plastocyanin-ferredoxin oxidoreductase, converting photonic excitation into a charge separation, which transfers an electron from the donor P700 chlorophyll pair to the spectroscopically characterized acceptors A0, A1, FX, FA and FB in turn.</text>
</comment>
<comment type="catalytic activity">
    <reaction evidence="1">
        <text>reduced [plastocyanin] + hnu + oxidized [2Fe-2S]-[ferredoxin] = oxidized [plastocyanin] + reduced [2Fe-2S]-[ferredoxin]</text>
        <dbReference type="Rhea" id="RHEA:30407"/>
        <dbReference type="Rhea" id="RHEA-COMP:10000"/>
        <dbReference type="Rhea" id="RHEA-COMP:10001"/>
        <dbReference type="Rhea" id="RHEA-COMP:10039"/>
        <dbReference type="Rhea" id="RHEA-COMP:10040"/>
        <dbReference type="ChEBI" id="CHEBI:29036"/>
        <dbReference type="ChEBI" id="CHEBI:30212"/>
        <dbReference type="ChEBI" id="CHEBI:33737"/>
        <dbReference type="ChEBI" id="CHEBI:33738"/>
        <dbReference type="ChEBI" id="CHEBI:49552"/>
        <dbReference type="EC" id="1.97.1.12"/>
    </reaction>
</comment>
<comment type="cofactor">
    <cofactor evidence="1">
        <name>[4Fe-4S] cluster</name>
        <dbReference type="ChEBI" id="CHEBI:49883"/>
    </cofactor>
    <text evidence="1">Binds 2 [4Fe-4S] clusters. Cluster 2 is most probably the spectroscopically characterized electron acceptor FA and cluster 1 is most probably FB.</text>
</comment>
<comment type="subunit">
    <text evidence="1">The eukaryotic PSI reaction center is composed of at least 11 subunits.</text>
</comment>
<comment type="subcellular location">
    <subcellularLocation>
        <location evidence="1">Plastid</location>
        <location evidence="1">Chloroplast thylakoid membrane</location>
        <topology evidence="1">Peripheral membrane protein</topology>
        <orientation evidence="1">Stromal side</orientation>
    </subcellularLocation>
</comment>
<feature type="chain" id="PRO_0000292123" description="Photosystem I iron-sulfur center">
    <location>
        <begin position="1"/>
        <end position="81"/>
    </location>
</feature>
<feature type="domain" description="4Fe-4S ferredoxin-type 1" evidence="1">
    <location>
        <begin position="2"/>
        <end position="31"/>
    </location>
</feature>
<feature type="domain" description="4Fe-4S ferredoxin-type 2" evidence="1">
    <location>
        <begin position="39"/>
        <end position="68"/>
    </location>
</feature>
<feature type="binding site" evidence="1">
    <location>
        <position position="11"/>
    </location>
    <ligand>
        <name>[4Fe-4S] cluster</name>
        <dbReference type="ChEBI" id="CHEBI:49883"/>
        <label>1</label>
    </ligand>
</feature>
<feature type="binding site" evidence="1">
    <location>
        <position position="14"/>
    </location>
    <ligand>
        <name>[4Fe-4S] cluster</name>
        <dbReference type="ChEBI" id="CHEBI:49883"/>
        <label>1</label>
    </ligand>
</feature>
<feature type="binding site" evidence="1">
    <location>
        <position position="17"/>
    </location>
    <ligand>
        <name>[4Fe-4S] cluster</name>
        <dbReference type="ChEBI" id="CHEBI:49883"/>
        <label>1</label>
    </ligand>
</feature>
<feature type="binding site" evidence="1">
    <location>
        <position position="21"/>
    </location>
    <ligand>
        <name>[4Fe-4S] cluster</name>
        <dbReference type="ChEBI" id="CHEBI:49883"/>
        <label>2</label>
    </ligand>
</feature>
<feature type="binding site" evidence="1">
    <location>
        <position position="48"/>
    </location>
    <ligand>
        <name>[4Fe-4S] cluster</name>
        <dbReference type="ChEBI" id="CHEBI:49883"/>
        <label>2</label>
    </ligand>
</feature>
<feature type="binding site" evidence="1">
    <location>
        <position position="51"/>
    </location>
    <ligand>
        <name>[4Fe-4S] cluster</name>
        <dbReference type="ChEBI" id="CHEBI:49883"/>
        <label>2</label>
    </ligand>
</feature>
<feature type="binding site" evidence="1">
    <location>
        <position position="54"/>
    </location>
    <ligand>
        <name>[4Fe-4S] cluster</name>
        <dbReference type="ChEBI" id="CHEBI:49883"/>
        <label>2</label>
    </ligand>
</feature>
<feature type="binding site" evidence="1">
    <location>
        <position position="58"/>
    </location>
    <ligand>
        <name>[4Fe-4S] cluster</name>
        <dbReference type="ChEBI" id="CHEBI:49883"/>
        <label>1</label>
    </ligand>
</feature>
<name>PSAC_NASOF</name>
<protein>
    <recommendedName>
        <fullName evidence="1">Photosystem I iron-sulfur center</fullName>
        <ecNumber evidence="1">1.97.1.12</ecNumber>
    </recommendedName>
    <alternativeName>
        <fullName evidence="1">9 kDa polypeptide</fullName>
    </alternativeName>
    <alternativeName>
        <fullName evidence="1">PSI-C</fullName>
    </alternativeName>
    <alternativeName>
        <fullName evidence="1">Photosystem I subunit VII</fullName>
    </alternativeName>
    <alternativeName>
        <fullName evidence="1">PsaC</fullName>
    </alternativeName>
</protein>
<gene>
    <name evidence="1" type="primary">psaC</name>
</gene>
<organism>
    <name type="scientific">Nasturtium officinale</name>
    <name type="common">Watercress</name>
    <name type="synonym">Rorippa nasturtium-aquaticum</name>
    <dbReference type="NCBI Taxonomy" id="65948"/>
    <lineage>
        <taxon>Eukaryota</taxon>
        <taxon>Viridiplantae</taxon>
        <taxon>Streptophyta</taxon>
        <taxon>Embryophyta</taxon>
        <taxon>Tracheophyta</taxon>
        <taxon>Spermatophyta</taxon>
        <taxon>Magnoliopsida</taxon>
        <taxon>eudicotyledons</taxon>
        <taxon>Gunneridae</taxon>
        <taxon>Pentapetalae</taxon>
        <taxon>rosids</taxon>
        <taxon>malvids</taxon>
        <taxon>Brassicales</taxon>
        <taxon>Brassicaceae</taxon>
        <taxon>Cardamineae</taxon>
        <taxon>Nasturtium</taxon>
    </lineage>
</organism>
<proteinExistence type="inferred from homology"/>